<protein>
    <recommendedName>
        <fullName>Succinate dehydrogenase [ubiquinone] cytochrome b small subunit, mitochondrial</fullName>
        <shortName>CybS</shortName>
    </recommendedName>
    <alternativeName>
        <fullName evidence="4">Succinate dehydrogenase complex subunit D</fullName>
    </alternativeName>
    <alternativeName>
        <fullName>Succinate-ubiquinone reductase membrane anchor subunit</fullName>
    </alternativeName>
</protein>
<reference key="1">
    <citation type="journal article" date="2000" name="Science">
        <title>The genome sequence of Drosophila melanogaster.</title>
        <authorList>
            <person name="Adams M.D."/>
            <person name="Celniker S.E."/>
            <person name="Holt R.A."/>
            <person name="Evans C.A."/>
            <person name="Gocayne J.D."/>
            <person name="Amanatides P.G."/>
            <person name="Scherer S.E."/>
            <person name="Li P.W."/>
            <person name="Hoskins R.A."/>
            <person name="Galle R.F."/>
            <person name="George R.A."/>
            <person name="Lewis S.E."/>
            <person name="Richards S."/>
            <person name="Ashburner M."/>
            <person name="Henderson S.N."/>
            <person name="Sutton G.G."/>
            <person name="Wortman J.R."/>
            <person name="Yandell M.D."/>
            <person name="Zhang Q."/>
            <person name="Chen L.X."/>
            <person name="Brandon R.C."/>
            <person name="Rogers Y.-H.C."/>
            <person name="Blazej R.G."/>
            <person name="Champe M."/>
            <person name="Pfeiffer B.D."/>
            <person name="Wan K.H."/>
            <person name="Doyle C."/>
            <person name="Baxter E.G."/>
            <person name="Helt G."/>
            <person name="Nelson C.R."/>
            <person name="Miklos G.L.G."/>
            <person name="Abril J.F."/>
            <person name="Agbayani A."/>
            <person name="An H.-J."/>
            <person name="Andrews-Pfannkoch C."/>
            <person name="Baldwin D."/>
            <person name="Ballew R.M."/>
            <person name="Basu A."/>
            <person name="Baxendale J."/>
            <person name="Bayraktaroglu L."/>
            <person name="Beasley E.M."/>
            <person name="Beeson K.Y."/>
            <person name="Benos P.V."/>
            <person name="Berman B.P."/>
            <person name="Bhandari D."/>
            <person name="Bolshakov S."/>
            <person name="Borkova D."/>
            <person name="Botchan M.R."/>
            <person name="Bouck J."/>
            <person name="Brokstein P."/>
            <person name="Brottier P."/>
            <person name="Burtis K.C."/>
            <person name="Busam D.A."/>
            <person name="Butler H."/>
            <person name="Cadieu E."/>
            <person name="Center A."/>
            <person name="Chandra I."/>
            <person name="Cherry J.M."/>
            <person name="Cawley S."/>
            <person name="Dahlke C."/>
            <person name="Davenport L.B."/>
            <person name="Davies P."/>
            <person name="de Pablos B."/>
            <person name="Delcher A."/>
            <person name="Deng Z."/>
            <person name="Mays A.D."/>
            <person name="Dew I."/>
            <person name="Dietz S.M."/>
            <person name="Dodson K."/>
            <person name="Doup L.E."/>
            <person name="Downes M."/>
            <person name="Dugan-Rocha S."/>
            <person name="Dunkov B.C."/>
            <person name="Dunn P."/>
            <person name="Durbin K.J."/>
            <person name="Evangelista C.C."/>
            <person name="Ferraz C."/>
            <person name="Ferriera S."/>
            <person name="Fleischmann W."/>
            <person name="Fosler C."/>
            <person name="Gabrielian A.E."/>
            <person name="Garg N.S."/>
            <person name="Gelbart W.M."/>
            <person name="Glasser K."/>
            <person name="Glodek A."/>
            <person name="Gong F."/>
            <person name="Gorrell J.H."/>
            <person name="Gu Z."/>
            <person name="Guan P."/>
            <person name="Harris M."/>
            <person name="Harris N.L."/>
            <person name="Harvey D.A."/>
            <person name="Heiman T.J."/>
            <person name="Hernandez J.R."/>
            <person name="Houck J."/>
            <person name="Hostin D."/>
            <person name="Houston K.A."/>
            <person name="Howland T.J."/>
            <person name="Wei M.-H."/>
            <person name="Ibegwam C."/>
            <person name="Jalali M."/>
            <person name="Kalush F."/>
            <person name="Karpen G.H."/>
            <person name="Ke Z."/>
            <person name="Kennison J.A."/>
            <person name="Ketchum K.A."/>
            <person name="Kimmel B.E."/>
            <person name="Kodira C.D."/>
            <person name="Kraft C.L."/>
            <person name="Kravitz S."/>
            <person name="Kulp D."/>
            <person name="Lai Z."/>
            <person name="Lasko P."/>
            <person name="Lei Y."/>
            <person name="Levitsky A.A."/>
            <person name="Li J.H."/>
            <person name="Li Z."/>
            <person name="Liang Y."/>
            <person name="Lin X."/>
            <person name="Liu X."/>
            <person name="Mattei B."/>
            <person name="McIntosh T.C."/>
            <person name="McLeod M.P."/>
            <person name="McPherson D."/>
            <person name="Merkulov G."/>
            <person name="Milshina N.V."/>
            <person name="Mobarry C."/>
            <person name="Morris J."/>
            <person name="Moshrefi A."/>
            <person name="Mount S.M."/>
            <person name="Moy M."/>
            <person name="Murphy B."/>
            <person name="Murphy L."/>
            <person name="Muzny D.M."/>
            <person name="Nelson D.L."/>
            <person name="Nelson D.R."/>
            <person name="Nelson K.A."/>
            <person name="Nixon K."/>
            <person name="Nusskern D.R."/>
            <person name="Pacleb J.M."/>
            <person name="Palazzolo M."/>
            <person name="Pittman G.S."/>
            <person name="Pan S."/>
            <person name="Pollard J."/>
            <person name="Puri V."/>
            <person name="Reese M.G."/>
            <person name="Reinert K."/>
            <person name="Remington K."/>
            <person name="Saunders R.D.C."/>
            <person name="Scheeler F."/>
            <person name="Shen H."/>
            <person name="Shue B.C."/>
            <person name="Siden-Kiamos I."/>
            <person name="Simpson M."/>
            <person name="Skupski M.P."/>
            <person name="Smith T.J."/>
            <person name="Spier E."/>
            <person name="Spradling A.C."/>
            <person name="Stapleton M."/>
            <person name="Strong R."/>
            <person name="Sun E."/>
            <person name="Svirskas R."/>
            <person name="Tector C."/>
            <person name="Turner R."/>
            <person name="Venter E."/>
            <person name="Wang A.H."/>
            <person name="Wang X."/>
            <person name="Wang Z.-Y."/>
            <person name="Wassarman D.A."/>
            <person name="Weinstock G.M."/>
            <person name="Weissenbach J."/>
            <person name="Williams S.M."/>
            <person name="Woodage T."/>
            <person name="Worley K.C."/>
            <person name="Wu D."/>
            <person name="Yang S."/>
            <person name="Yao Q.A."/>
            <person name="Ye J."/>
            <person name="Yeh R.-F."/>
            <person name="Zaveri J.S."/>
            <person name="Zhan M."/>
            <person name="Zhang G."/>
            <person name="Zhao Q."/>
            <person name="Zheng L."/>
            <person name="Zheng X.H."/>
            <person name="Zhong F.N."/>
            <person name="Zhong W."/>
            <person name="Zhou X."/>
            <person name="Zhu S.C."/>
            <person name="Zhu X."/>
            <person name="Smith H.O."/>
            <person name="Gibbs R.A."/>
            <person name="Myers E.W."/>
            <person name="Rubin G.M."/>
            <person name="Venter J.C."/>
        </authorList>
    </citation>
    <scope>NUCLEOTIDE SEQUENCE [LARGE SCALE GENOMIC DNA]</scope>
    <source>
        <strain>Berkeley</strain>
    </source>
</reference>
<reference key="2">
    <citation type="journal article" date="2002" name="Genome Biol.">
        <title>Annotation of the Drosophila melanogaster euchromatic genome: a systematic review.</title>
        <authorList>
            <person name="Misra S."/>
            <person name="Crosby M.A."/>
            <person name="Mungall C.J."/>
            <person name="Matthews B.B."/>
            <person name="Campbell K.S."/>
            <person name="Hradecky P."/>
            <person name="Huang Y."/>
            <person name="Kaminker J.S."/>
            <person name="Millburn G.H."/>
            <person name="Prochnik S.E."/>
            <person name="Smith C.D."/>
            <person name="Tupy J.L."/>
            <person name="Whitfield E.J."/>
            <person name="Bayraktaroglu L."/>
            <person name="Berman B.P."/>
            <person name="Bettencourt B.R."/>
            <person name="Celniker S.E."/>
            <person name="de Grey A.D.N.J."/>
            <person name="Drysdale R.A."/>
            <person name="Harris N.L."/>
            <person name="Richter J."/>
            <person name="Russo S."/>
            <person name="Schroeder A.J."/>
            <person name="Shu S.Q."/>
            <person name="Stapleton M."/>
            <person name="Yamada C."/>
            <person name="Ashburner M."/>
            <person name="Gelbart W.M."/>
            <person name="Rubin G.M."/>
            <person name="Lewis S.E."/>
        </authorList>
    </citation>
    <scope>GENOME REANNOTATION</scope>
    <source>
        <strain>Berkeley</strain>
    </source>
</reference>
<reference key="3">
    <citation type="journal article" date="2002" name="Genome Biol.">
        <title>A Drosophila full-length cDNA resource.</title>
        <authorList>
            <person name="Stapleton M."/>
            <person name="Carlson J.W."/>
            <person name="Brokstein P."/>
            <person name="Yu C."/>
            <person name="Champe M."/>
            <person name="George R.A."/>
            <person name="Guarin H."/>
            <person name="Kronmiller B."/>
            <person name="Pacleb J.M."/>
            <person name="Park S."/>
            <person name="Wan K.H."/>
            <person name="Rubin G.M."/>
            <person name="Celniker S.E."/>
        </authorList>
    </citation>
    <scope>NUCLEOTIDE SEQUENCE [LARGE SCALE MRNA]</scope>
    <source>
        <strain>Berkeley</strain>
        <tissue>Embryo</tissue>
    </source>
</reference>
<gene>
    <name evidence="4" type="primary">SdhD</name>
    <name evidence="4" type="ORF">CG10219</name>
</gene>
<accession>Q9VCI5</accession>
<dbReference type="EMBL" id="AE014297">
    <property type="protein sequence ID" value="AAF56180.1"/>
    <property type="molecule type" value="Genomic_DNA"/>
</dbReference>
<dbReference type="EMBL" id="AY071388">
    <property type="protein sequence ID" value="AAL49010.1"/>
    <property type="molecule type" value="mRNA"/>
</dbReference>
<dbReference type="EMBL" id="AY071617">
    <property type="protein sequence ID" value="AAL49239.1"/>
    <property type="molecule type" value="mRNA"/>
</dbReference>
<dbReference type="RefSeq" id="NP_651181.1">
    <property type="nucleotide sequence ID" value="NM_142924.3"/>
</dbReference>
<dbReference type="SMR" id="Q9VCI5"/>
<dbReference type="BioGRID" id="67746">
    <property type="interactions" value="10"/>
</dbReference>
<dbReference type="ComplexPortal" id="CPX-8622">
    <property type="entry name" value="Mitochondrial respiratory chain complex II"/>
</dbReference>
<dbReference type="ComplexPortal" id="CPX-8627">
    <property type="entry name" value="Mitochondrial respiratory chain complex II, testis-specific variant"/>
</dbReference>
<dbReference type="FunCoup" id="Q9VCI5">
    <property type="interactions" value="940"/>
</dbReference>
<dbReference type="IntAct" id="Q9VCI5">
    <property type="interactions" value="5"/>
</dbReference>
<dbReference type="STRING" id="7227.FBpp0083857"/>
<dbReference type="PaxDb" id="7227-FBpp0083857"/>
<dbReference type="DNASU" id="42808"/>
<dbReference type="EnsemblMetazoa" id="FBtr0084466">
    <property type="protein sequence ID" value="FBpp0083857"/>
    <property type="gene ID" value="FBgn0039112"/>
</dbReference>
<dbReference type="GeneID" id="42808"/>
<dbReference type="KEGG" id="dme:Dmel_CG10219"/>
<dbReference type="UCSC" id="CG10219-RA">
    <property type="organism name" value="d. melanogaster"/>
</dbReference>
<dbReference type="AGR" id="FB:FBgn0039112"/>
<dbReference type="CTD" id="6392"/>
<dbReference type="FlyBase" id="FBgn0039112">
    <property type="gene designation" value="SdhD"/>
</dbReference>
<dbReference type="VEuPathDB" id="VectorBase:FBgn0039112"/>
<dbReference type="eggNOG" id="KOG4097">
    <property type="taxonomic scope" value="Eukaryota"/>
</dbReference>
<dbReference type="GeneTree" id="ENSGT00390000010003"/>
<dbReference type="HOGENOM" id="CLU_096618_1_0_1"/>
<dbReference type="InParanoid" id="Q9VCI5"/>
<dbReference type="OMA" id="VMHQHWG"/>
<dbReference type="OrthoDB" id="18577at2759"/>
<dbReference type="PhylomeDB" id="Q9VCI5"/>
<dbReference type="Reactome" id="R-DME-71403">
    <property type="pathway name" value="Citric acid cycle (TCA cycle)"/>
</dbReference>
<dbReference type="UniPathway" id="UPA00223"/>
<dbReference type="BioGRID-ORCS" id="42808">
    <property type="hits" value="0 hits in 3 CRISPR screens"/>
</dbReference>
<dbReference type="GenomeRNAi" id="42808"/>
<dbReference type="PRO" id="PR:Q9VCI5"/>
<dbReference type="Proteomes" id="UP000000803">
    <property type="component" value="Chromosome 3R"/>
</dbReference>
<dbReference type="Bgee" id="FBgn0039112">
    <property type="expression patterns" value="Expressed in lamina monopolar neuron L2 (Drosophila) in brain and 231 other cell types or tissues"/>
</dbReference>
<dbReference type="GO" id="GO:0005743">
    <property type="term" value="C:mitochondrial inner membrane"/>
    <property type="evidence" value="ECO:0000250"/>
    <property type="project" value="UniProtKB"/>
</dbReference>
<dbReference type="GO" id="GO:0045273">
    <property type="term" value="C:respiratory chain complex II (succinate dehydrogenase)"/>
    <property type="evidence" value="ECO:0000250"/>
    <property type="project" value="UniProtKB"/>
</dbReference>
<dbReference type="GO" id="GO:0020037">
    <property type="term" value="F:heme binding"/>
    <property type="evidence" value="ECO:0000250"/>
    <property type="project" value="UniProtKB"/>
</dbReference>
<dbReference type="GO" id="GO:0046872">
    <property type="term" value="F:metal ion binding"/>
    <property type="evidence" value="ECO:0007669"/>
    <property type="project" value="UniProtKB-KW"/>
</dbReference>
<dbReference type="GO" id="GO:0043495">
    <property type="term" value="F:protein-membrane adaptor activity"/>
    <property type="evidence" value="ECO:0000250"/>
    <property type="project" value="FlyBase"/>
</dbReference>
<dbReference type="GO" id="GO:0048039">
    <property type="term" value="F:ubiquinone binding"/>
    <property type="evidence" value="ECO:0000250"/>
    <property type="project" value="UniProtKB"/>
</dbReference>
<dbReference type="GO" id="GO:0006121">
    <property type="term" value="P:mitochondrial electron transport, succinate to ubiquinone"/>
    <property type="evidence" value="ECO:0000318"/>
    <property type="project" value="GO_Central"/>
</dbReference>
<dbReference type="GO" id="GO:0006099">
    <property type="term" value="P:tricarboxylic acid cycle"/>
    <property type="evidence" value="ECO:0000250"/>
    <property type="project" value="UniProtKB"/>
</dbReference>
<dbReference type="CDD" id="cd03496">
    <property type="entry name" value="SQR_TypeC_CybS"/>
    <property type="match status" value="1"/>
</dbReference>
<dbReference type="FunFam" id="1.20.1300.10:FF:000017">
    <property type="entry name" value="Succinate dehydrogenase [ubiquinone] cytochrome b small subunit"/>
    <property type="match status" value="1"/>
</dbReference>
<dbReference type="Gene3D" id="1.20.1300.10">
    <property type="entry name" value="Fumarate reductase/succinate dehydrogenase, transmembrane subunit"/>
    <property type="match status" value="1"/>
</dbReference>
<dbReference type="InterPro" id="IPR007992">
    <property type="entry name" value="CybS"/>
</dbReference>
<dbReference type="InterPro" id="IPR034804">
    <property type="entry name" value="SQR/QFR_C/D"/>
</dbReference>
<dbReference type="PANTHER" id="PTHR13337">
    <property type="entry name" value="SUCCINATE DEHYDROGENASE"/>
    <property type="match status" value="1"/>
</dbReference>
<dbReference type="PANTHER" id="PTHR13337:SF2">
    <property type="entry name" value="SUCCINATE DEHYDROGENASE [UBIQUINONE] CYTOCHROME B SMALL SUBUNIT, MITOCHONDRIAL"/>
    <property type="match status" value="1"/>
</dbReference>
<dbReference type="Pfam" id="PF05328">
    <property type="entry name" value="CybS"/>
    <property type="match status" value="1"/>
</dbReference>
<dbReference type="SUPFAM" id="SSF81343">
    <property type="entry name" value="Fumarate reductase respiratory complex transmembrane subunits"/>
    <property type="match status" value="1"/>
</dbReference>
<name>DHSD_DROME</name>
<proteinExistence type="evidence at transcript level"/>
<comment type="function">
    <text evidence="1">Membrane-anchoring subunit of succinate dehydrogenase (SDH) that is involved in complex II of the mitochondrial electron transport chain and is responsible for transferring electrons from succinate to ubiquinone (coenzyme Q).</text>
</comment>
<comment type="pathway">
    <text>Carbohydrate metabolism; tricarboxylic acid cycle.</text>
</comment>
<comment type="subunit">
    <text evidence="1">Forms part of complex II containing four subunits: a flavoprotein (FP), an iron-sulfur protein (IP) and a cytochrome b composed of a large and a small subunit.</text>
</comment>
<comment type="subcellular location">
    <subcellularLocation>
        <location evidence="1">Mitochondrion inner membrane</location>
        <topology evidence="1">Multi-pass membrane protein</topology>
    </subcellularLocation>
</comment>
<comment type="similarity">
    <text evidence="3">Belongs to the CybS family.</text>
</comment>
<keyword id="KW-0249">Electron transport</keyword>
<keyword id="KW-0349">Heme</keyword>
<keyword id="KW-0408">Iron</keyword>
<keyword id="KW-0472">Membrane</keyword>
<keyword id="KW-0479">Metal-binding</keyword>
<keyword id="KW-0496">Mitochondrion</keyword>
<keyword id="KW-0999">Mitochondrion inner membrane</keyword>
<keyword id="KW-1185">Reference proteome</keyword>
<keyword id="KW-0809">Transit peptide</keyword>
<keyword id="KW-0812">Transmembrane</keyword>
<keyword id="KW-1133">Transmembrane helix</keyword>
<keyword id="KW-0813">Transport</keyword>
<keyword id="KW-0816">Tricarboxylic acid cycle</keyword>
<sequence>MSLSLLLRGAVRCNAANLVKSARITPLKSYSTLVANVQRKAVVQPLAVAKIVAPVVREISVSAPRMASAGSSHTLLWTVERIVSAGLLAVIPAAFIAPSQVLDALMAISVVIHTHWGVEAMVVDYMRPSVVGNVLPKVAHIALIIISVATLGGLFYFIQNDVGLANGIKRFWAIKGKDAEKA</sequence>
<feature type="transit peptide" description="Mitochondrion" evidence="2">
    <location>
        <begin position="1"/>
        <end status="unknown"/>
    </location>
</feature>
<feature type="chain" id="PRO_0000006492" description="Succinate dehydrogenase [ubiquinone] cytochrome b small subunit, mitochondrial">
    <location>
        <begin status="unknown"/>
        <end position="182"/>
    </location>
</feature>
<feature type="topological domain" description="Mitochondrial matrix" evidence="2">
    <location>
        <begin position="1"/>
        <end position="71"/>
    </location>
</feature>
<feature type="transmembrane region" description="Helical" evidence="2">
    <location>
        <begin position="72"/>
        <end position="96"/>
    </location>
</feature>
<feature type="topological domain" description="Mitochondrial intermembrane" evidence="2">
    <location>
        <begin position="97"/>
        <end position="101"/>
    </location>
</feature>
<feature type="transmembrane region" description="Helical" evidence="2">
    <location>
        <begin position="102"/>
        <end position="122"/>
    </location>
</feature>
<feature type="topological domain" description="Mitochondrial matrix" evidence="2">
    <location>
        <begin position="123"/>
        <end position="135"/>
    </location>
</feature>
<feature type="transmembrane region" description="Helical" evidence="2">
    <location>
        <begin position="136"/>
        <end position="157"/>
    </location>
</feature>
<feature type="topological domain" description="Mitochondrial intermembrane" evidence="2">
    <location>
        <begin position="158"/>
        <end position="182"/>
    </location>
</feature>
<feature type="binding site" description="axial binding residue" evidence="1">
    <location>
        <position position="113"/>
    </location>
    <ligand>
        <name>heme</name>
        <dbReference type="ChEBI" id="CHEBI:30413"/>
        <note>ligand shared with large subunit</note>
    </ligand>
    <ligandPart>
        <name>Fe</name>
        <dbReference type="ChEBI" id="CHEBI:18248"/>
    </ligandPart>
</feature>
<feature type="binding site" evidence="1">
    <location>
        <position position="125"/>
    </location>
    <ligand>
        <name>a ubiquinone</name>
        <dbReference type="ChEBI" id="CHEBI:16389"/>
        <note>ligand shared with IP</note>
    </ligand>
</feature>
<evidence type="ECO:0000250" key="1"/>
<evidence type="ECO:0000255" key="2"/>
<evidence type="ECO:0000305" key="3"/>
<evidence type="ECO:0000312" key="4">
    <source>
        <dbReference type="FlyBase" id="FBgn0039112"/>
    </source>
</evidence>
<organism>
    <name type="scientific">Drosophila melanogaster</name>
    <name type="common">Fruit fly</name>
    <dbReference type="NCBI Taxonomy" id="7227"/>
    <lineage>
        <taxon>Eukaryota</taxon>
        <taxon>Metazoa</taxon>
        <taxon>Ecdysozoa</taxon>
        <taxon>Arthropoda</taxon>
        <taxon>Hexapoda</taxon>
        <taxon>Insecta</taxon>
        <taxon>Pterygota</taxon>
        <taxon>Neoptera</taxon>
        <taxon>Endopterygota</taxon>
        <taxon>Diptera</taxon>
        <taxon>Brachycera</taxon>
        <taxon>Muscomorpha</taxon>
        <taxon>Ephydroidea</taxon>
        <taxon>Drosophilidae</taxon>
        <taxon>Drosophila</taxon>
        <taxon>Sophophora</taxon>
    </lineage>
</organism>